<reference key="1">
    <citation type="journal article" date="1996" name="DNA Res.">
        <title>Sequence analysis of the genome of the unicellular cyanobacterium Synechocystis sp. strain PCC6803. II. Sequence determination of the entire genome and assignment of potential protein-coding regions.</title>
        <authorList>
            <person name="Kaneko T."/>
            <person name="Sato S."/>
            <person name="Kotani H."/>
            <person name="Tanaka A."/>
            <person name="Asamizu E."/>
            <person name="Nakamura Y."/>
            <person name="Miyajima N."/>
            <person name="Hirosawa M."/>
            <person name="Sugiura M."/>
            <person name="Sasamoto S."/>
            <person name="Kimura T."/>
            <person name="Hosouchi T."/>
            <person name="Matsuno A."/>
            <person name="Muraki A."/>
            <person name="Nakazaki N."/>
            <person name="Naruo K."/>
            <person name="Okumura S."/>
            <person name="Shimpo S."/>
            <person name="Takeuchi C."/>
            <person name="Wada T."/>
            <person name="Watanabe A."/>
            <person name="Yamada M."/>
            <person name="Yasuda M."/>
            <person name="Tabata S."/>
        </authorList>
    </citation>
    <scope>NUCLEOTIDE SEQUENCE [LARGE SCALE GENOMIC DNA]</scope>
    <source>
        <strain>ATCC 27184 / PCC 6803 / Kazusa</strain>
    </source>
</reference>
<comment type="function">
    <text evidence="1">Key enzyme in the regulation of glycerol uptake and metabolism. Catalyzes the phosphorylation of glycerol to yield sn-glycerol 3-phosphate.</text>
</comment>
<comment type="catalytic activity">
    <reaction evidence="1">
        <text>glycerol + ATP = sn-glycerol 3-phosphate + ADP + H(+)</text>
        <dbReference type="Rhea" id="RHEA:21644"/>
        <dbReference type="ChEBI" id="CHEBI:15378"/>
        <dbReference type="ChEBI" id="CHEBI:17754"/>
        <dbReference type="ChEBI" id="CHEBI:30616"/>
        <dbReference type="ChEBI" id="CHEBI:57597"/>
        <dbReference type="ChEBI" id="CHEBI:456216"/>
        <dbReference type="EC" id="2.7.1.30"/>
    </reaction>
</comment>
<comment type="activity regulation">
    <text evidence="1">Inhibited by fructose 1,6-bisphosphate (FBP).</text>
</comment>
<comment type="pathway">
    <text evidence="1">Polyol metabolism; glycerol degradation via glycerol kinase pathway; sn-glycerol 3-phosphate from glycerol: step 1/1.</text>
</comment>
<comment type="similarity">
    <text evidence="1">Belongs to the FGGY kinase family.</text>
</comment>
<dbReference type="EC" id="2.7.1.30" evidence="1"/>
<dbReference type="EMBL" id="BA000022">
    <property type="protein sequence ID" value="BAA18354.1"/>
    <property type="molecule type" value="Genomic_DNA"/>
</dbReference>
<dbReference type="PIR" id="S75895">
    <property type="entry name" value="S75895"/>
</dbReference>
<dbReference type="SMR" id="P74260"/>
<dbReference type="FunCoup" id="P74260">
    <property type="interactions" value="323"/>
</dbReference>
<dbReference type="STRING" id="1148.gene:10499230"/>
<dbReference type="PaxDb" id="1148-1653440"/>
<dbReference type="EnsemblBacteria" id="BAA18354">
    <property type="protein sequence ID" value="BAA18354"/>
    <property type="gene ID" value="BAA18354"/>
</dbReference>
<dbReference type="KEGG" id="syn:slr1672"/>
<dbReference type="eggNOG" id="COG0554">
    <property type="taxonomic scope" value="Bacteria"/>
</dbReference>
<dbReference type="InParanoid" id="P74260"/>
<dbReference type="PhylomeDB" id="P74260"/>
<dbReference type="BRENDA" id="2.7.1.30">
    <property type="organism ID" value="6192"/>
</dbReference>
<dbReference type="UniPathway" id="UPA00618">
    <property type="reaction ID" value="UER00672"/>
</dbReference>
<dbReference type="Proteomes" id="UP000001425">
    <property type="component" value="Chromosome"/>
</dbReference>
<dbReference type="GO" id="GO:0005829">
    <property type="term" value="C:cytosol"/>
    <property type="evidence" value="ECO:0000318"/>
    <property type="project" value="GO_Central"/>
</dbReference>
<dbReference type="GO" id="GO:0005524">
    <property type="term" value="F:ATP binding"/>
    <property type="evidence" value="ECO:0007669"/>
    <property type="project" value="UniProtKB-UniRule"/>
</dbReference>
<dbReference type="GO" id="GO:0004370">
    <property type="term" value="F:glycerol kinase activity"/>
    <property type="evidence" value="ECO:0000250"/>
    <property type="project" value="UniProtKB"/>
</dbReference>
<dbReference type="GO" id="GO:0019563">
    <property type="term" value="P:glycerol catabolic process"/>
    <property type="evidence" value="ECO:0000318"/>
    <property type="project" value="GO_Central"/>
</dbReference>
<dbReference type="GO" id="GO:0006071">
    <property type="term" value="P:glycerol metabolic process"/>
    <property type="evidence" value="ECO:0000250"/>
    <property type="project" value="UniProtKB"/>
</dbReference>
<dbReference type="GO" id="GO:0006072">
    <property type="term" value="P:glycerol-3-phosphate metabolic process"/>
    <property type="evidence" value="ECO:0007669"/>
    <property type="project" value="InterPro"/>
</dbReference>
<dbReference type="CDD" id="cd07786">
    <property type="entry name" value="FGGY_EcGK_like"/>
    <property type="match status" value="1"/>
</dbReference>
<dbReference type="FunFam" id="3.30.420.40:FF:000008">
    <property type="entry name" value="Glycerol kinase"/>
    <property type="match status" value="1"/>
</dbReference>
<dbReference type="Gene3D" id="3.30.420.40">
    <property type="match status" value="2"/>
</dbReference>
<dbReference type="HAMAP" id="MF_00186">
    <property type="entry name" value="Glycerol_kin"/>
    <property type="match status" value="1"/>
</dbReference>
<dbReference type="InterPro" id="IPR043129">
    <property type="entry name" value="ATPase_NBD"/>
</dbReference>
<dbReference type="InterPro" id="IPR000577">
    <property type="entry name" value="Carb_kinase_FGGY"/>
</dbReference>
<dbReference type="InterPro" id="IPR018483">
    <property type="entry name" value="Carb_kinase_FGGY_CS"/>
</dbReference>
<dbReference type="InterPro" id="IPR018485">
    <property type="entry name" value="FGGY_C"/>
</dbReference>
<dbReference type="InterPro" id="IPR018484">
    <property type="entry name" value="FGGY_N"/>
</dbReference>
<dbReference type="InterPro" id="IPR005999">
    <property type="entry name" value="Glycerol_kin"/>
</dbReference>
<dbReference type="NCBIfam" id="TIGR01311">
    <property type="entry name" value="glycerol_kin"/>
    <property type="match status" value="1"/>
</dbReference>
<dbReference type="NCBIfam" id="NF000756">
    <property type="entry name" value="PRK00047.1"/>
    <property type="match status" value="1"/>
</dbReference>
<dbReference type="PANTHER" id="PTHR10196:SF69">
    <property type="entry name" value="GLYCEROL KINASE"/>
    <property type="match status" value="1"/>
</dbReference>
<dbReference type="PANTHER" id="PTHR10196">
    <property type="entry name" value="SUGAR KINASE"/>
    <property type="match status" value="1"/>
</dbReference>
<dbReference type="Pfam" id="PF02782">
    <property type="entry name" value="FGGY_C"/>
    <property type="match status" value="1"/>
</dbReference>
<dbReference type="Pfam" id="PF00370">
    <property type="entry name" value="FGGY_N"/>
    <property type="match status" value="1"/>
</dbReference>
<dbReference type="PIRSF" id="PIRSF000538">
    <property type="entry name" value="GlpK"/>
    <property type="match status" value="1"/>
</dbReference>
<dbReference type="SUPFAM" id="SSF53067">
    <property type="entry name" value="Actin-like ATPase domain"/>
    <property type="match status" value="2"/>
</dbReference>
<dbReference type="PROSITE" id="PS00445">
    <property type="entry name" value="FGGY_KINASES_2"/>
    <property type="match status" value="1"/>
</dbReference>
<proteinExistence type="inferred from homology"/>
<keyword id="KW-0067">ATP-binding</keyword>
<keyword id="KW-0319">Glycerol metabolism</keyword>
<keyword id="KW-0418">Kinase</keyword>
<keyword id="KW-0547">Nucleotide-binding</keyword>
<keyword id="KW-1185">Reference proteome</keyword>
<keyword id="KW-0808">Transferase</keyword>
<evidence type="ECO:0000255" key="1">
    <source>
        <dbReference type="HAMAP-Rule" id="MF_00186"/>
    </source>
</evidence>
<feature type="chain" id="PRO_0000059511" description="Glycerol kinase">
    <location>
        <begin position="1"/>
        <end position="495"/>
    </location>
</feature>
<feature type="binding site" evidence="1">
    <location>
        <position position="16"/>
    </location>
    <ligand>
        <name>ADP</name>
        <dbReference type="ChEBI" id="CHEBI:456216"/>
    </ligand>
</feature>
<feature type="binding site" evidence="1">
    <location>
        <position position="16"/>
    </location>
    <ligand>
        <name>ATP</name>
        <dbReference type="ChEBI" id="CHEBI:30616"/>
    </ligand>
</feature>
<feature type="binding site" evidence="1">
    <location>
        <position position="16"/>
    </location>
    <ligand>
        <name>sn-glycerol 3-phosphate</name>
        <dbReference type="ChEBI" id="CHEBI:57597"/>
    </ligand>
</feature>
<feature type="binding site" evidence="1">
    <location>
        <position position="17"/>
    </location>
    <ligand>
        <name>ATP</name>
        <dbReference type="ChEBI" id="CHEBI:30616"/>
    </ligand>
</feature>
<feature type="binding site" evidence="1">
    <location>
        <position position="20"/>
    </location>
    <ligand>
        <name>ADP</name>
        <dbReference type="ChEBI" id="CHEBI:456216"/>
    </ligand>
</feature>
<feature type="binding site" evidence="1">
    <location>
        <position position="86"/>
    </location>
    <ligand>
        <name>glycerol</name>
        <dbReference type="ChEBI" id="CHEBI:17754"/>
    </ligand>
</feature>
<feature type="binding site" evidence="1">
    <location>
        <position position="86"/>
    </location>
    <ligand>
        <name>sn-glycerol 3-phosphate</name>
        <dbReference type="ChEBI" id="CHEBI:57597"/>
    </ligand>
</feature>
<feature type="binding site" evidence="1">
    <location>
        <position position="87"/>
    </location>
    <ligand>
        <name>glycerol</name>
        <dbReference type="ChEBI" id="CHEBI:17754"/>
    </ligand>
</feature>
<feature type="binding site" evidence="1">
    <location>
        <position position="87"/>
    </location>
    <ligand>
        <name>sn-glycerol 3-phosphate</name>
        <dbReference type="ChEBI" id="CHEBI:57597"/>
    </ligand>
</feature>
<feature type="binding site" evidence="1">
    <location>
        <position position="138"/>
    </location>
    <ligand>
        <name>glycerol</name>
        <dbReference type="ChEBI" id="CHEBI:17754"/>
    </ligand>
</feature>
<feature type="binding site" evidence="1">
    <location>
        <position position="138"/>
    </location>
    <ligand>
        <name>sn-glycerol 3-phosphate</name>
        <dbReference type="ChEBI" id="CHEBI:57597"/>
    </ligand>
</feature>
<feature type="binding site" evidence="1">
    <location>
        <position position="246"/>
    </location>
    <ligand>
        <name>glycerol</name>
        <dbReference type="ChEBI" id="CHEBI:17754"/>
    </ligand>
</feature>
<feature type="binding site" evidence="1">
    <location>
        <position position="246"/>
    </location>
    <ligand>
        <name>sn-glycerol 3-phosphate</name>
        <dbReference type="ChEBI" id="CHEBI:57597"/>
    </ligand>
</feature>
<feature type="binding site" evidence="1">
    <location>
        <position position="247"/>
    </location>
    <ligand>
        <name>glycerol</name>
        <dbReference type="ChEBI" id="CHEBI:17754"/>
    </ligand>
</feature>
<feature type="binding site" evidence="1">
    <location>
        <position position="268"/>
    </location>
    <ligand>
        <name>ADP</name>
        <dbReference type="ChEBI" id="CHEBI:456216"/>
    </ligand>
</feature>
<feature type="binding site" evidence="1">
    <location>
        <position position="268"/>
    </location>
    <ligand>
        <name>ATP</name>
        <dbReference type="ChEBI" id="CHEBI:30616"/>
    </ligand>
</feature>
<feature type="binding site" evidence="1">
    <location>
        <position position="316"/>
    </location>
    <ligand>
        <name>ADP</name>
        <dbReference type="ChEBI" id="CHEBI:456216"/>
    </ligand>
</feature>
<feature type="binding site" evidence="1">
    <location>
        <position position="316"/>
    </location>
    <ligand>
        <name>ATP</name>
        <dbReference type="ChEBI" id="CHEBI:30616"/>
    </ligand>
</feature>
<feature type="binding site" evidence="1">
    <location>
        <position position="320"/>
    </location>
    <ligand>
        <name>ATP</name>
        <dbReference type="ChEBI" id="CHEBI:30616"/>
    </ligand>
</feature>
<feature type="binding site" evidence="1">
    <location>
        <position position="417"/>
    </location>
    <ligand>
        <name>ADP</name>
        <dbReference type="ChEBI" id="CHEBI:456216"/>
    </ligand>
</feature>
<feature type="binding site" evidence="1">
    <location>
        <position position="417"/>
    </location>
    <ligand>
        <name>ATP</name>
        <dbReference type="ChEBI" id="CHEBI:30616"/>
    </ligand>
</feature>
<feature type="binding site" evidence="1">
    <location>
        <position position="421"/>
    </location>
    <ligand>
        <name>ADP</name>
        <dbReference type="ChEBI" id="CHEBI:456216"/>
    </ligand>
</feature>
<gene>
    <name evidence="1" type="primary">glpK</name>
    <name type="ordered locus">slr1672</name>
</gene>
<name>GLPK_SYNY3</name>
<organism>
    <name type="scientific">Synechocystis sp. (strain ATCC 27184 / PCC 6803 / Kazusa)</name>
    <dbReference type="NCBI Taxonomy" id="1111708"/>
    <lineage>
        <taxon>Bacteria</taxon>
        <taxon>Bacillati</taxon>
        <taxon>Cyanobacteriota</taxon>
        <taxon>Cyanophyceae</taxon>
        <taxon>Synechococcales</taxon>
        <taxon>Merismopediaceae</taxon>
        <taxon>Synechocystis</taxon>
    </lineage>
</organism>
<protein>
    <recommendedName>
        <fullName evidence="1">Glycerol kinase</fullName>
        <ecNumber evidence="1">2.7.1.30</ecNumber>
    </recommendedName>
    <alternativeName>
        <fullName evidence="1">ATP:glycerol 3-phosphotransferase</fullName>
    </alternativeName>
    <alternativeName>
        <fullName evidence="1">Glycerokinase</fullName>
        <shortName evidence="1">GK</shortName>
    </alternativeName>
</protein>
<sequence length="495" mass="54351">MTAKHNQYVMALDLGTTGNRAILFDYEGNIVGQAYKELTQFYPKAGWVEHDALEIWRDTKTVMQEVVQKTAIQPQQIVAIGLTVQRETCLLWDKTTGQPLHPAIVWQDRRTAHFCGELTAAGYVDEIYERTGLVLDAYFSGTKLHWLLDWVKQSKSVDPANLLAGTIDSWALWNLTGGKVHRTDHSNASRTMVLNLDSLIWDEKLLDLFTIPAQIMPEVQPSLSYFGVTDPEILGVEIPITAIFGDQQAALYAHGCDRPGLLKCTYGTGAFLVANTGQTVTRSQHRLLSTVAWTQTNRDKSLTRDYALEGSMFTAGSCVQWLRDKLGLIESAAASESLARSVDSNGGVYFVPALSGLGAPHWDMNACGAFLGLTAGVTKAHLVRSVLEAIAFQAREVVEAINQDSPAPIQQLKVDGGACNNDFLMQCQADVLGIPVERPAVLDATAQGAAFGAGLKIGWNQLQIRFFRTFHHGTISLICLQFLPMRIQEGVSVDQ</sequence>
<accession>P74260</accession>